<comment type="function">
    <text evidence="1">Hydrolyzes ribosome-free peptidyl-tRNAs (with 1 or more amino acids incorporated), which drop off the ribosome during protein synthesis, or as a result of ribosome stalling.</text>
</comment>
<comment type="function">
    <text evidence="1">Catalyzes the release of premature peptidyl moieties from peptidyl-tRNA molecules trapped in stalled 50S ribosomal subunits, and thus maintains levels of free tRNAs and 50S ribosomes.</text>
</comment>
<comment type="catalytic activity">
    <reaction evidence="1">
        <text>an N-acyl-L-alpha-aminoacyl-tRNA + H2O = an N-acyl-L-amino acid + a tRNA + H(+)</text>
        <dbReference type="Rhea" id="RHEA:54448"/>
        <dbReference type="Rhea" id="RHEA-COMP:10123"/>
        <dbReference type="Rhea" id="RHEA-COMP:13883"/>
        <dbReference type="ChEBI" id="CHEBI:15377"/>
        <dbReference type="ChEBI" id="CHEBI:15378"/>
        <dbReference type="ChEBI" id="CHEBI:59874"/>
        <dbReference type="ChEBI" id="CHEBI:78442"/>
        <dbReference type="ChEBI" id="CHEBI:138191"/>
        <dbReference type="EC" id="3.1.1.29"/>
    </reaction>
</comment>
<comment type="subunit">
    <text evidence="1 2">Monomer.</text>
</comment>
<comment type="subcellular location">
    <subcellularLocation>
        <location evidence="1">Cytoplasm</location>
    </subcellularLocation>
</comment>
<comment type="disruption phenotype">
    <text evidence="2">Essential, it cannot be deleted.</text>
</comment>
<comment type="similarity">
    <text evidence="1">Belongs to the PTH family.</text>
</comment>
<keyword id="KW-0002">3D-structure</keyword>
<keyword id="KW-0963">Cytoplasm</keyword>
<keyword id="KW-0378">Hydrolase</keyword>
<keyword id="KW-0694">RNA-binding</keyword>
<keyword id="KW-0820">tRNA-binding</keyword>
<evidence type="ECO:0000255" key="1">
    <source>
        <dbReference type="HAMAP-Rule" id="MF_00083"/>
    </source>
</evidence>
<evidence type="ECO:0000269" key="2">
    <source>
    </source>
</evidence>
<evidence type="ECO:0000303" key="3">
    <source>
    </source>
</evidence>
<evidence type="ECO:0007744" key="4">
    <source>
        <dbReference type="PDB" id="3V2I"/>
    </source>
</evidence>
<evidence type="ECO:0007829" key="5">
    <source>
        <dbReference type="PDB" id="3V2I"/>
    </source>
</evidence>
<reference key="1">
    <citation type="journal article" date="2005" name="BMC Genomics">
        <title>Bacterial genome adaptation to niches: divergence of the potential virulence genes in three Burkholderia species of different survival strategies.</title>
        <authorList>
            <person name="Kim H.S."/>
            <person name="Schell M.A."/>
            <person name="Yu Y."/>
            <person name="Ulrich R.L."/>
            <person name="Sarria S.H."/>
            <person name="Nierman W.C."/>
            <person name="DeShazer D."/>
        </authorList>
    </citation>
    <scope>NUCLEOTIDE SEQUENCE [LARGE SCALE GENOMIC DNA]</scope>
    <source>
        <strain>ATCC 700388 / DSM 13276 / CCUG 48851 / CIP 106301 / E264</strain>
    </source>
</reference>
<reference evidence="4" key="2">
    <citation type="journal article" date="2013" name="PLoS ONE">
        <title>Combining functional and structural genomics to sample the essential Burkholderia structome.</title>
        <authorList>
            <person name="Baugh L."/>
            <person name="Gallagher L.A."/>
            <person name="Patrapuvich R."/>
            <person name="Clifton M.C."/>
            <person name="Gardberg A.S."/>
            <person name="Edwards T.E."/>
            <person name="Armour B."/>
            <person name="Begley D.W."/>
            <person name="Dieterich S.H."/>
            <person name="Dranow D.M."/>
            <person name="Abendroth J."/>
            <person name="Fairman J.W."/>
            <person name="Fox D."/>
            <person name="Staker B.L."/>
            <person name="Phan I."/>
            <person name="Gillespie A."/>
            <person name="Choi R."/>
            <person name="Nakazawa-Hewitt S."/>
            <person name="Nguyen M.T."/>
            <person name="Napuli A."/>
            <person name="Barrett L."/>
            <person name="Buchko G.W."/>
            <person name="Stacy R."/>
            <person name="Myler P.J."/>
            <person name="Stewart L.J."/>
            <person name="Manoil C."/>
            <person name="Van Voorhis W.C."/>
        </authorList>
    </citation>
    <scope>X-RAY CRYSTALLOGRAPHY (1.65 ANGSTROMS)</scope>
    <scope>SUBUNIT</scope>
    <scope>DISRUPTION PHENOTYPE</scope>
    <source>
        <strain>ATCC 700388 / DSM 13276 / CCUG 48851 / CIP 106301 / E264</strain>
    </source>
</reference>
<name>PTH_BURTA</name>
<gene>
    <name evidence="1" type="primary">pth</name>
    <name type="ordered locus">BTH_I0472</name>
</gene>
<protein>
    <recommendedName>
        <fullName evidence="1 3">Peptidyl-tRNA hydrolase</fullName>
        <shortName evidence="1">Pth</shortName>
        <ecNumber evidence="1">3.1.1.29</ecNumber>
    </recommendedName>
</protein>
<dbReference type="EC" id="3.1.1.29" evidence="1"/>
<dbReference type="EMBL" id="CP000086">
    <property type="protein sequence ID" value="ABC37803.1"/>
    <property type="molecule type" value="Genomic_DNA"/>
</dbReference>
<dbReference type="RefSeq" id="WP_009893073.1">
    <property type="nucleotide sequence ID" value="NZ_CP008785.1"/>
</dbReference>
<dbReference type="PDB" id="3V2I">
    <property type="method" value="X-ray"/>
    <property type="resolution" value="1.65 A"/>
    <property type="chains" value="A=1-201"/>
</dbReference>
<dbReference type="PDBsum" id="3V2I"/>
<dbReference type="SMR" id="Q2T1B9"/>
<dbReference type="GeneID" id="45120235"/>
<dbReference type="KEGG" id="bte:BTH_I0472"/>
<dbReference type="HOGENOM" id="CLU_062456_3_1_4"/>
<dbReference type="EvolutionaryTrace" id="Q2T1B9"/>
<dbReference type="Proteomes" id="UP000001930">
    <property type="component" value="Chromosome I"/>
</dbReference>
<dbReference type="GO" id="GO:0005737">
    <property type="term" value="C:cytoplasm"/>
    <property type="evidence" value="ECO:0007669"/>
    <property type="project" value="UniProtKB-SubCell"/>
</dbReference>
<dbReference type="GO" id="GO:0004045">
    <property type="term" value="F:peptidyl-tRNA hydrolase activity"/>
    <property type="evidence" value="ECO:0007669"/>
    <property type="project" value="UniProtKB-UniRule"/>
</dbReference>
<dbReference type="GO" id="GO:0000049">
    <property type="term" value="F:tRNA binding"/>
    <property type="evidence" value="ECO:0007669"/>
    <property type="project" value="UniProtKB-UniRule"/>
</dbReference>
<dbReference type="GO" id="GO:0006515">
    <property type="term" value="P:protein quality control for misfolded or incompletely synthesized proteins"/>
    <property type="evidence" value="ECO:0007669"/>
    <property type="project" value="UniProtKB-UniRule"/>
</dbReference>
<dbReference type="GO" id="GO:0072344">
    <property type="term" value="P:rescue of stalled ribosome"/>
    <property type="evidence" value="ECO:0007669"/>
    <property type="project" value="UniProtKB-UniRule"/>
</dbReference>
<dbReference type="CDD" id="cd00462">
    <property type="entry name" value="PTH"/>
    <property type="match status" value="1"/>
</dbReference>
<dbReference type="FunFam" id="3.40.50.1470:FF:000001">
    <property type="entry name" value="Peptidyl-tRNA hydrolase"/>
    <property type="match status" value="1"/>
</dbReference>
<dbReference type="Gene3D" id="3.40.50.1470">
    <property type="entry name" value="Peptidyl-tRNA hydrolase"/>
    <property type="match status" value="1"/>
</dbReference>
<dbReference type="HAMAP" id="MF_00083">
    <property type="entry name" value="Pept_tRNA_hydro_bact"/>
    <property type="match status" value="1"/>
</dbReference>
<dbReference type="InterPro" id="IPR001328">
    <property type="entry name" value="Pept_tRNA_hydro"/>
</dbReference>
<dbReference type="InterPro" id="IPR018171">
    <property type="entry name" value="Pept_tRNA_hydro_CS"/>
</dbReference>
<dbReference type="InterPro" id="IPR036416">
    <property type="entry name" value="Pept_tRNA_hydro_sf"/>
</dbReference>
<dbReference type="NCBIfam" id="TIGR00447">
    <property type="entry name" value="pth"/>
    <property type="match status" value="1"/>
</dbReference>
<dbReference type="PANTHER" id="PTHR17224">
    <property type="entry name" value="PEPTIDYL-TRNA HYDROLASE"/>
    <property type="match status" value="1"/>
</dbReference>
<dbReference type="PANTHER" id="PTHR17224:SF1">
    <property type="entry name" value="PEPTIDYL-TRNA HYDROLASE"/>
    <property type="match status" value="1"/>
</dbReference>
<dbReference type="Pfam" id="PF01195">
    <property type="entry name" value="Pept_tRNA_hydro"/>
    <property type="match status" value="1"/>
</dbReference>
<dbReference type="SUPFAM" id="SSF53178">
    <property type="entry name" value="Peptidyl-tRNA hydrolase-like"/>
    <property type="match status" value="1"/>
</dbReference>
<dbReference type="PROSITE" id="PS01195">
    <property type="entry name" value="PEPT_TRNA_HYDROL_1"/>
    <property type="match status" value="1"/>
</dbReference>
<dbReference type="PROSITE" id="PS01196">
    <property type="entry name" value="PEPT_TRNA_HYDROL_2"/>
    <property type="match status" value="1"/>
</dbReference>
<proteinExistence type="evidence at protein level"/>
<accession>Q2T1B9</accession>
<organism>
    <name type="scientific">Burkholderia thailandensis (strain ATCC 700388 / DSM 13276 / CCUG 48851 / CIP 106301 / E264)</name>
    <dbReference type="NCBI Taxonomy" id="271848"/>
    <lineage>
        <taxon>Bacteria</taxon>
        <taxon>Pseudomonadati</taxon>
        <taxon>Pseudomonadota</taxon>
        <taxon>Betaproteobacteria</taxon>
        <taxon>Burkholderiales</taxon>
        <taxon>Burkholderiaceae</taxon>
        <taxon>Burkholderia</taxon>
        <taxon>pseudomallei group</taxon>
    </lineage>
</organism>
<sequence length="201" mass="22101">MIKLIVGLGNPGAEYTATRHNAGFWLVDQLAREAGATLRDERRFHGFYAKARLYGEEVHLLEPQTYMNRSGQSVVALAHFFKILPNEILVAHDELDLPPGAVKLKLGGGSGGHNGLKDISAHLSSQQYWRLRIGIGHPRDMIPESARAGAKPDVANFVLKPPRKEEQDVIDAAIERALAVMPAVVKGETERAMMQLHRNGA</sequence>
<feature type="chain" id="PRO_0000264014" description="Peptidyl-tRNA hydrolase">
    <location>
        <begin position="1"/>
        <end position="201"/>
    </location>
</feature>
<feature type="active site" description="Proton acceptor" evidence="1">
    <location>
        <position position="20"/>
    </location>
</feature>
<feature type="binding site" evidence="1">
    <location>
        <position position="15"/>
    </location>
    <ligand>
        <name>tRNA</name>
        <dbReference type="ChEBI" id="CHEBI:17843"/>
    </ligand>
</feature>
<feature type="binding site" evidence="1">
    <location>
        <position position="66"/>
    </location>
    <ligand>
        <name>tRNA</name>
        <dbReference type="ChEBI" id="CHEBI:17843"/>
    </ligand>
</feature>
<feature type="binding site" evidence="1">
    <location>
        <position position="68"/>
    </location>
    <ligand>
        <name>tRNA</name>
        <dbReference type="ChEBI" id="CHEBI:17843"/>
    </ligand>
</feature>
<feature type="binding site" evidence="1">
    <location>
        <position position="114"/>
    </location>
    <ligand>
        <name>tRNA</name>
        <dbReference type="ChEBI" id="CHEBI:17843"/>
    </ligand>
</feature>
<feature type="site" description="Discriminates between blocked and unblocked aminoacyl-tRNA" evidence="1">
    <location>
        <position position="10"/>
    </location>
</feature>
<feature type="site" description="Stabilizes the basic form of H active site to accept a proton" evidence="1">
    <location>
        <position position="93"/>
    </location>
</feature>
<feature type="strand" evidence="5">
    <location>
        <begin position="4"/>
        <end position="7"/>
    </location>
</feature>
<feature type="helix" evidence="5">
    <location>
        <begin position="13"/>
        <end position="15"/>
    </location>
</feature>
<feature type="helix" evidence="5">
    <location>
        <begin position="19"/>
        <end position="21"/>
    </location>
</feature>
<feature type="helix" evidence="5">
    <location>
        <begin position="22"/>
        <end position="34"/>
    </location>
</feature>
<feature type="strand" evidence="5">
    <location>
        <begin position="39"/>
        <end position="41"/>
    </location>
</feature>
<feature type="helix" evidence="5">
    <location>
        <begin position="42"/>
        <end position="44"/>
    </location>
</feature>
<feature type="strand" evidence="5">
    <location>
        <begin position="46"/>
        <end position="53"/>
    </location>
</feature>
<feature type="strand" evidence="5">
    <location>
        <begin position="56"/>
        <end position="63"/>
    </location>
</feature>
<feature type="helix" evidence="5">
    <location>
        <begin position="67"/>
        <end position="69"/>
    </location>
</feature>
<feature type="helix" evidence="5">
    <location>
        <begin position="70"/>
        <end position="81"/>
    </location>
</feature>
<feature type="helix" evidence="5">
    <location>
        <begin position="85"/>
        <end position="87"/>
    </location>
</feature>
<feature type="strand" evidence="5">
    <location>
        <begin position="88"/>
        <end position="94"/>
    </location>
</feature>
<feature type="strand" evidence="5">
    <location>
        <begin position="102"/>
        <end position="106"/>
    </location>
</feature>
<feature type="helix" evidence="5">
    <location>
        <begin position="114"/>
        <end position="123"/>
    </location>
</feature>
<feature type="strand" evidence="5">
    <location>
        <begin position="128"/>
        <end position="134"/>
    </location>
</feature>
<feature type="turn" evidence="5">
    <location>
        <begin position="138"/>
        <end position="141"/>
    </location>
</feature>
<feature type="helix" evidence="5">
    <location>
        <begin position="154"/>
        <end position="157"/>
    </location>
</feature>
<feature type="helix" evidence="5">
    <location>
        <begin position="164"/>
        <end position="185"/>
    </location>
</feature>
<feature type="helix" evidence="5">
    <location>
        <begin position="189"/>
        <end position="195"/>
    </location>
</feature>